<dbReference type="EC" id="2.7.4.3" evidence="1"/>
<dbReference type="EMBL" id="CP000388">
    <property type="protein sequence ID" value="ABG41401.1"/>
    <property type="molecule type" value="Genomic_DNA"/>
</dbReference>
<dbReference type="RefSeq" id="WP_011575658.1">
    <property type="nucleotide sequence ID" value="NC_008228.1"/>
</dbReference>
<dbReference type="SMR" id="Q15RT7"/>
<dbReference type="STRING" id="342610.Patl_2893"/>
<dbReference type="KEGG" id="pat:Patl_2893"/>
<dbReference type="eggNOG" id="COG0563">
    <property type="taxonomic scope" value="Bacteria"/>
</dbReference>
<dbReference type="HOGENOM" id="CLU_032354_1_2_6"/>
<dbReference type="OrthoDB" id="9805030at2"/>
<dbReference type="UniPathway" id="UPA00588">
    <property type="reaction ID" value="UER00649"/>
</dbReference>
<dbReference type="Proteomes" id="UP000001981">
    <property type="component" value="Chromosome"/>
</dbReference>
<dbReference type="GO" id="GO:0005737">
    <property type="term" value="C:cytoplasm"/>
    <property type="evidence" value="ECO:0007669"/>
    <property type="project" value="UniProtKB-SubCell"/>
</dbReference>
<dbReference type="GO" id="GO:0004017">
    <property type="term" value="F:adenylate kinase activity"/>
    <property type="evidence" value="ECO:0007669"/>
    <property type="project" value="UniProtKB-UniRule"/>
</dbReference>
<dbReference type="GO" id="GO:0005524">
    <property type="term" value="F:ATP binding"/>
    <property type="evidence" value="ECO:0007669"/>
    <property type="project" value="UniProtKB-UniRule"/>
</dbReference>
<dbReference type="GO" id="GO:0044209">
    <property type="term" value="P:AMP salvage"/>
    <property type="evidence" value="ECO:0007669"/>
    <property type="project" value="UniProtKB-UniRule"/>
</dbReference>
<dbReference type="CDD" id="cd01428">
    <property type="entry name" value="ADK"/>
    <property type="match status" value="1"/>
</dbReference>
<dbReference type="FunFam" id="3.40.50.300:FF:000106">
    <property type="entry name" value="Adenylate kinase mitochondrial"/>
    <property type="match status" value="1"/>
</dbReference>
<dbReference type="Gene3D" id="3.40.50.300">
    <property type="entry name" value="P-loop containing nucleotide triphosphate hydrolases"/>
    <property type="match status" value="1"/>
</dbReference>
<dbReference type="HAMAP" id="MF_00235">
    <property type="entry name" value="Adenylate_kinase_Adk"/>
    <property type="match status" value="1"/>
</dbReference>
<dbReference type="InterPro" id="IPR006259">
    <property type="entry name" value="Adenyl_kin_sub"/>
</dbReference>
<dbReference type="InterPro" id="IPR000850">
    <property type="entry name" value="Adenylat/UMP-CMP_kin"/>
</dbReference>
<dbReference type="InterPro" id="IPR033690">
    <property type="entry name" value="Adenylat_kinase_CS"/>
</dbReference>
<dbReference type="InterPro" id="IPR007862">
    <property type="entry name" value="Adenylate_kinase_lid-dom"/>
</dbReference>
<dbReference type="InterPro" id="IPR027417">
    <property type="entry name" value="P-loop_NTPase"/>
</dbReference>
<dbReference type="NCBIfam" id="TIGR01351">
    <property type="entry name" value="adk"/>
    <property type="match status" value="1"/>
</dbReference>
<dbReference type="NCBIfam" id="NF001379">
    <property type="entry name" value="PRK00279.1-1"/>
    <property type="match status" value="1"/>
</dbReference>
<dbReference type="NCBIfam" id="NF001380">
    <property type="entry name" value="PRK00279.1-2"/>
    <property type="match status" value="1"/>
</dbReference>
<dbReference type="NCBIfam" id="NF001381">
    <property type="entry name" value="PRK00279.1-3"/>
    <property type="match status" value="1"/>
</dbReference>
<dbReference type="NCBIfam" id="NF011100">
    <property type="entry name" value="PRK14527.1"/>
    <property type="match status" value="1"/>
</dbReference>
<dbReference type="PANTHER" id="PTHR23359">
    <property type="entry name" value="NUCLEOTIDE KINASE"/>
    <property type="match status" value="1"/>
</dbReference>
<dbReference type="Pfam" id="PF00406">
    <property type="entry name" value="ADK"/>
    <property type="match status" value="1"/>
</dbReference>
<dbReference type="Pfam" id="PF05191">
    <property type="entry name" value="ADK_lid"/>
    <property type="match status" value="1"/>
</dbReference>
<dbReference type="PRINTS" id="PR00094">
    <property type="entry name" value="ADENYLTKNASE"/>
</dbReference>
<dbReference type="SUPFAM" id="SSF52540">
    <property type="entry name" value="P-loop containing nucleoside triphosphate hydrolases"/>
    <property type="match status" value="1"/>
</dbReference>
<dbReference type="PROSITE" id="PS00113">
    <property type="entry name" value="ADENYLATE_KINASE"/>
    <property type="match status" value="1"/>
</dbReference>
<feature type="chain" id="PRO_1000021758" description="Adenylate kinase">
    <location>
        <begin position="1"/>
        <end position="214"/>
    </location>
</feature>
<feature type="region of interest" description="NMP" evidence="1">
    <location>
        <begin position="30"/>
        <end position="59"/>
    </location>
</feature>
<feature type="region of interest" description="LID" evidence="1">
    <location>
        <begin position="122"/>
        <end position="159"/>
    </location>
</feature>
<feature type="binding site" evidence="1">
    <location>
        <begin position="10"/>
        <end position="15"/>
    </location>
    <ligand>
        <name>ATP</name>
        <dbReference type="ChEBI" id="CHEBI:30616"/>
    </ligand>
</feature>
<feature type="binding site" evidence="1">
    <location>
        <position position="31"/>
    </location>
    <ligand>
        <name>AMP</name>
        <dbReference type="ChEBI" id="CHEBI:456215"/>
    </ligand>
</feature>
<feature type="binding site" evidence="1">
    <location>
        <position position="36"/>
    </location>
    <ligand>
        <name>AMP</name>
        <dbReference type="ChEBI" id="CHEBI:456215"/>
    </ligand>
</feature>
<feature type="binding site" evidence="1">
    <location>
        <begin position="57"/>
        <end position="59"/>
    </location>
    <ligand>
        <name>AMP</name>
        <dbReference type="ChEBI" id="CHEBI:456215"/>
    </ligand>
</feature>
<feature type="binding site" evidence="1">
    <location>
        <begin position="85"/>
        <end position="88"/>
    </location>
    <ligand>
        <name>AMP</name>
        <dbReference type="ChEBI" id="CHEBI:456215"/>
    </ligand>
</feature>
<feature type="binding site" evidence="1">
    <location>
        <position position="92"/>
    </location>
    <ligand>
        <name>AMP</name>
        <dbReference type="ChEBI" id="CHEBI:456215"/>
    </ligand>
</feature>
<feature type="binding site" evidence="1">
    <location>
        <position position="123"/>
    </location>
    <ligand>
        <name>ATP</name>
        <dbReference type="ChEBI" id="CHEBI:30616"/>
    </ligand>
</feature>
<feature type="binding site" evidence="1">
    <location>
        <begin position="132"/>
        <end position="133"/>
    </location>
    <ligand>
        <name>ATP</name>
        <dbReference type="ChEBI" id="CHEBI:30616"/>
    </ligand>
</feature>
<feature type="binding site" evidence="1">
    <location>
        <position position="156"/>
    </location>
    <ligand>
        <name>AMP</name>
        <dbReference type="ChEBI" id="CHEBI:456215"/>
    </ligand>
</feature>
<feature type="binding site" evidence="1">
    <location>
        <position position="167"/>
    </location>
    <ligand>
        <name>AMP</name>
        <dbReference type="ChEBI" id="CHEBI:456215"/>
    </ligand>
</feature>
<feature type="binding site" evidence="1">
    <location>
        <position position="200"/>
    </location>
    <ligand>
        <name>ATP</name>
        <dbReference type="ChEBI" id="CHEBI:30616"/>
    </ligand>
</feature>
<gene>
    <name evidence="1" type="primary">adk</name>
    <name type="ordered locus">Patl_2893</name>
</gene>
<protein>
    <recommendedName>
        <fullName evidence="1">Adenylate kinase</fullName>
        <shortName evidence="1">AK</shortName>
        <ecNumber evidence="1">2.7.4.3</ecNumber>
    </recommendedName>
    <alternativeName>
        <fullName evidence="1">ATP-AMP transphosphorylase</fullName>
    </alternativeName>
    <alternativeName>
        <fullName evidence="1">ATP:AMP phosphotransferase</fullName>
    </alternativeName>
    <alternativeName>
        <fullName evidence="1">Adenylate monophosphate kinase</fullName>
    </alternativeName>
</protein>
<comment type="function">
    <text evidence="1">Catalyzes the reversible transfer of the terminal phosphate group between ATP and AMP. Plays an important role in cellular energy homeostasis and in adenine nucleotide metabolism.</text>
</comment>
<comment type="catalytic activity">
    <reaction evidence="1">
        <text>AMP + ATP = 2 ADP</text>
        <dbReference type="Rhea" id="RHEA:12973"/>
        <dbReference type="ChEBI" id="CHEBI:30616"/>
        <dbReference type="ChEBI" id="CHEBI:456215"/>
        <dbReference type="ChEBI" id="CHEBI:456216"/>
        <dbReference type="EC" id="2.7.4.3"/>
    </reaction>
</comment>
<comment type="pathway">
    <text evidence="1">Purine metabolism; AMP biosynthesis via salvage pathway; AMP from ADP: step 1/1.</text>
</comment>
<comment type="subunit">
    <text evidence="1">Monomer.</text>
</comment>
<comment type="subcellular location">
    <subcellularLocation>
        <location evidence="1">Cytoplasm</location>
    </subcellularLocation>
</comment>
<comment type="domain">
    <text evidence="1">Consists of three domains, a large central CORE domain and two small peripheral domains, NMPbind and LID, which undergo movements during catalysis. The LID domain closes over the site of phosphoryl transfer upon ATP binding. Assembling and dissambling the active center during each catalytic cycle provides an effective means to prevent ATP hydrolysis.</text>
</comment>
<comment type="similarity">
    <text evidence="1">Belongs to the adenylate kinase family.</text>
</comment>
<proteinExistence type="inferred from homology"/>
<accession>Q15RT7</accession>
<sequence length="214" mass="23418">MRIILLGAPGAGKGTQAQYLMGKYGIPQISTGDMLRAAIKAGTELGNAAKRVMDEGKLVSDELIIGLVKERIAQDDCKGGFLLDGFPRTIPQADAMKEAGINVDHVIEFDVPDEVIVERMAGRRVHPASGRVYHLQYNPPQNDGKDDETGEDLVIRADDQEDTVRHRLGVYHEQTKPLVDYYQSEASANNCQYHKIDGTKAVDVVSDQLSSLLG</sequence>
<keyword id="KW-0067">ATP-binding</keyword>
<keyword id="KW-0963">Cytoplasm</keyword>
<keyword id="KW-0418">Kinase</keyword>
<keyword id="KW-0545">Nucleotide biosynthesis</keyword>
<keyword id="KW-0547">Nucleotide-binding</keyword>
<keyword id="KW-0808">Transferase</keyword>
<evidence type="ECO:0000255" key="1">
    <source>
        <dbReference type="HAMAP-Rule" id="MF_00235"/>
    </source>
</evidence>
<reference key="1">
    <citation type="submission" date="2006-06" db="EMBL/GenBank/DDBJ databases">
        <title>Complete sequence of Pseudoalteromonas atlantica T6c.</title>
        <authorList>
            <consortium name="US DOE Joint Genome Institute"/>
            <person name="Copeland A."/>
            <person name="Lucas S."/>
            <person name="Lapidus A."/>
            <person name="Barry K."/>
            <person name="Detter J.C."/>
            <person name="Glavina del Rio T."/>
            <person name="Hammon N."/>
            <person name="Israni S."/>
            <person name="Dalin E."/>
            <person name="Tice H."/>
            <person name="Pitluck S."/>
            <person name="Saunders E."/>
            <person name="Brettin T."/>
            <person name="Bruce D."/>
            <person name="Han C."/>
            <person name="Tapia R."/>
            <person name="Gilna P."/>
            <person name="Schmutz J."/>
            <person name="Larimer F."/>
            <person name="Land M."/>
            <person name="Hauser L."/>
            <person name="Kyrpides N."/>
            <person name="Kim E."/>
            <person name="Karls A.C."/>
            <person name="Bartlett D."/>
            <person name="Higgins B.P."/>
            <person name="Richardson P."/>
        </authorList>
    </citation>
    <scope>NUCLEOTIDE SEQUENCE [LARGE SCALE GENOMIC DNA]</scope>
    <source>
        <strain>T6c / ATCC BAA-1087</strain>
    </source>
</reference>
<name>KAD_PSEA6</name>
<organism>
    <name type="scientific">Pseudoalteromonas atlantica (strain T6c / ATCC BAA-1087)</name>
    <dbReference type="NCBI Taxonomy" id="3042615"/>
    <lineage>
        <taxon>Bacteria</taxon>
        <taxon>Pseudomonadati</taxon>
        <taxon>Pseudomonadota</taxon>
        <taxon>Gammaproteobacteria</taxon>
        <taxon>Alteromonadales</taxon>
        <taxon>Alteromonadaceae</taxon>
        <taxon>Paraglaciecola</taxon>
    </lineage>
</organism>